<feature type="chain" id="PRO_0000345359" description="tRNA uridine 5-carboxymethylaminomethyl modification enzyme MnmG">
    <location>
        <begin position="1"/>
        <end position="634"/>
    </location>
</feature>
<feature type="binding site" evidence="1">
    <location>
        <begin position="14"/>
        <end position="19"/>
    </location>
    <ligand>
        <name>FAD</name>
        <dbReference type="ChEBI" id="CHEBI:57692"/>
    </ligand>
</feature>
<feature type="binding site" evidence="1">
    <location>
        <begin position="279"/>
        <end position="293"/>
    </location>
    <ligand>
        <name>NAD(+)</name>
        <dbReference type="ChEBI" id="CHEBI:57540"/>
    </ligand>
</feature>
<organism>
    <name type="scientific">Xanthomonas campestris pv. campestris (strain B100)</name>
    <dbReference type="NCBI Taxonomy" id="509169"/>
    <lineage>
        <taxon>Bacteria</taxon>
        <taxon>Pseudomonadati</taxon>
        <taxon>Pseudomonadota</taxon>
        <taxon>Gammaproteobacteria</taxon>
        <taxon>Lysobacterales</taxon>
        <taxon>Lysobacteraceae</taxon>
        <taxon>Xanthomonas</taxon>
    </lineage>
</organism>
<name>MNMG_XANCB</name>
<evidence type="ECO:0000255" key="1">
    <source>
        <dbReference type="HAMAP-Rule" id="MF_00129"/>
    </source>
</evidence>
<proteinExistence type="inferred from homology"/>
<keyword id="KW-0963">Cytoplasm</keyword>
<keyword id="KW-0274">FAD</keyword>
<keyword id="KW-0285">Flavoprotein</keyword>
<keyword id="KW-0520">NAD</keyword>
<keyword id="KW-0819">tRNA processing</keyword>
<gene>
    <name evidence="1" type="primary">mnmG</name>
    <name evidence="1" type="synonym">gidA</name>
    <name type="ordered locus">xcc-b100_0403</name>
</gene>
<reference key="1">
    <citation type="journal article" date="2008" name="J. Biotechnol.">
        <title>The genome of Xanthomonas campestris pv. campestris B100 and its use for the reconstruction of metabolic pathways involved in xanthan biosynthesis.</title>
        <authorList>
            <person name="Vorhoelter F.-J."/>
            <person name="Schneiker S."/>
            <person name="Goesmann A."/>
            <person name="Krause L."/>
            <person name="Bekel T."/>
            <person name="Kaiser O."/>
            <person name="Linke B."/>
            <person name="Patschkowski T."/>
            <person name="Rueckert C."/>
            <person name="Schmid J."/>
            <person name="Sidhu V.K."/>
            <person name="Sieber V."/>
            <person name="Tauch A."/>
            <person name="Watt S.A."/>
            <person name="Weisshaar B."/>
            <person name="Becker A."/>
            <person name="Niehaus K."/>
            <person name="Puehler A."/>
        </authorList>
    </citation>
    <scope>NUCLEOTIDE SEQUENCE [LARGE SCALE GENOMIC DNA]</scope>
    <source>
        <strain>B100</strain>
    </source>
</reference>
<sequence>MSDSFYRYDVIVIGGGHAGTEAALAAARAGARTLLLTHNIETVGAMSCNPAIGGIGKGHLVKEIDALGGAMAKAADLAGIQWRTLNASKGPAVRATRCQADRNLYRSAIRRIVEAQPNLTVFQAAVDDLIIHNGAAEGDSVRGVITQTGLRFEATAVVLTAGTFLAGKIHVGETQYAAGRMGDPPATTLAARLRERPFAIDRLKTGTPPRIDGRTLDYTMMDEQPGDDPLPVMSFMGQVSDHPTQVSCWITHTTEQTHDIIRGALHRSPLYSGQIEGIGPRYCPSIEDKVVRFADKTSHQIFVEPEGLDVTEIYPNGISTSLPFDVQLALVRSIRGFAQAHITRPGYAIEYDFFDPRGLKASLETKAVGGLFFAGQINGTTGYEEAAAQGLLAGLNAARHVQALPAWSPRRDEAYLGVLVDDLITHGTTEPYRMFTSRAEYRLQLREDNADLRLTGVGRAMGLVDDARWARFSSKQEAVQRETARLSALWATPGNALGREVVDTLGVPMSRETNVLDLIKRPELSYAALMRVPTLGPGVDDAQVAEQVEIGVKYAGYLDRQRDEIARQQRHETTPIPEGFDYAGVRGLSMEVQQKLERVRPQSIGQAQRIPGMTPAAISLLLVHLERARRSQVA</sequence>
<protein>
    <recommendedName>
        <fullName evidence="1">tRNA uridine 5-carboxymethylaminomethyl modification enzyme MnmG</fullName>
    </recommendedName>
    <alternativeName>
        <fullName evidence="1">Glucose-inhibited division protein A</fullName>
    </alternativeName>
</protein>
<accession>B0RMP9</accession>
<dbReference type="EMBL" id="AM920689">
    <property type="protein sequence ID" value="CAP49734.1"/>
    <property type="molecule type" value="Genomic_DNA"/>
</dbReference>
<dbReference type="SMR" id="B0RMP9"/>
<dbReference type="KEGG" id="xca:xcc-b100_0403"/>
<dbReference type="HOGENOM" id="CLU_007831_2_2_6"/>
<dbReference type="Proteomes" id="UP000001188">
    <property type="component" value="Chromosome"/>
</dbReference>
<dbReference type="GO" id="GO:0005829">
    <property type="term" value="C:cytosol"/>
    <property type="evidence" value="ECO:0007669"/>
    <property type="project" value="TreeGrafter"/>
</dbReference>
<dbReference type="GO" id="GO:0050660">
    <property type="term" value="F:flavin adenine dinucleotide binding"/>
    <property type="evidence" value="ECO:0007669"/>
    <property type="project" value="UniProtKB-UniRule"/>
</dbReference>
<dbReference type="GO" id="GO:0030488">
    <property type="term" value="P:tRNA methylation"/>
    <property type="evidence" value="ECO:0007669"/>
    <property type="project" value="TreeGrafter"/>
</dbReference>
<dbReference type="GO" id="GO:0002098">
    <property type="term" value="P:tRNA wobble uridine modification"/>
    <property type="evidence" value="ECO:0007669"/>
    <property type="project" value="InterPro"/>
</dbReference>
<dbReference type="FunFam" id="1.10.10.1800:FF:000001">
    <property type="entry name" value="tRNA uridine 5-carboxymethylaminomethyl modification enzyme MnmG"/>
    <property type="match status" value="1"/>
</dbReference>
<dbReference type="FunFam" id="1.10.150.570:FF:000001">
    <property type="entry name" value="tRNA uridine 5-carboxymethylaminomethyl modification enzyme MnmG"/>
    <property type="match status" value="1"/>
</dbReference>
<dbReference type="FunFam" id="3.50.50.60:FF:000002">
    <property type="entry name" value="tRNA uridine 5-carboxymethylaminomethyl modification enzyme MnmG"/>
    <property type="match status" value="1"/>
</dbReference>
<dbReference type="FunFam" id="3.50.50.60:FF:000010">
    <property type="entry name" value="tRNA uridine 5-carboxymethylaminomethyl modification enzyme MnmG"/>
    <property type="match status" value="1"/>
</dbReference>
<dbReference type="Gene3D" id="3.50.50.60">
    <property type="entry name" value="FAD/NAD(P)-binding domain"/>
    <property type="match status" value="2"/>
</dbReference>
<dbReference type="Gene3D" id="1.10.150.570">
    <property type="entry name" value="GidA associated domain, C-terminal subdomain"/>
    <property type="match status" value="1"/>
</dbReference>
<dbReference type="Gene3D" id="1.10.10.1800">
    <property type="entry name" value="tRNA uridine 5-carboxymethylaminomethyl modification enzyme MnmG/GidA"/>
    <property type="match status" value="1"/>
</dbReference>
<dbReference type="HAMAP" id="MF_00129">
    <property type="entry name" value="MnmG_GidA"/>
    <property type="match status" value="1"/>
</dbReference>
<dbReference type="InterPro" id="IPR036188">
    <property type="entry name" value="FAD/NAD-bd_sf"/>
</dbReference>
<dbReference type="InterPro" id="IPR049312">
    <property type="entry name" value="GIDA_C_N"/>
</dbReference>
<dbReference type="InterPro" id="IPR004416">
    <property type="entry name" value="MnmG"/>
</dbReference>
<dbReference type="InterPro" id="IPR002218">
    <property type="entry name" value="MnmG-rel"/>
</dbReference>
<dbReference type="InterPro" id="IPR020595">
    <property type="entry name" value="MnmG-rel_CS"/>
</dbReference>
<dbReference type="InterPro" id="IPR026904">
    <property type="entry name" value="MnmG_C"/>
</dbReference>
<dbReference type="InterPro" id="IPR047001">
    <property type="entry name" value="MnmG_C_subdom"/>
</dbReference>
<dbReference type="InterPro" id="IPR044920">
    <property type="entry name" value="MnmG_C_subdom_sf"/>
</dbReference>
<dbReference type="InterPro" id="IPR040131">
    <property type="entry name" value="MnmG_N"/>
</dbReference>
<dbReference type="NCBIfam" id="TIGR00136">
    <property type="entry name" value="mnmG_gidA"/>
    <property type="match status" value="1"/>
</dbReference>
<dbReference type="PANTHER" id="PTHR11806">
    <property type="entry name" value="GLUCOSE INHIBITED DIVISION PROTEIN A"/>
    <property type="match status" value="1"/>
</dbReference>
<dbReference type="PANTHER" id="PTHR11806:SF0">
    <property type="entry name" value="PROTEIN MTO1 HOMOLOG, MITOCHONDRIAL"/>
    <property type="match status" value="1"/>
</dbReference>
<dbReference type="Pfam" id="PF01134">
    <property type="entry name" value="GIDA"/>
    <property type="match status" value="1"/>
</dbReference>
<dbReference type="Pfam" id="PF21680">
    <property type="entry name" value="GIDA_C_1st"/>
    <property type="match status" value="1"/>
</dbReference>
<dbReference type="Pfam" id="PF13932">
    <property type="entry name" value="SAM_GIDA_C"/>
    <property type="match status" value="1"/>
</dbReference>
<dbReference type="PRINTS" id="PR00469">
    <property type="entry name" value="PNDRDTASEII"/>
</dbReference>
<dbReference type="SMART" id="SM01228">
    <property type="entry name" value="GIDA_assoc_3"/>
    <property type="match status" value="1"/>
</dbReference>
<dbReference type="SUPFAM" id="SSF51905">
    <property type="entry name" value="FAD/NAD(P)-binding domain"/>
    <property type="match status" value="1"/>
</dbReference>
<dbReference type="PROSITE" id="PS01280">
    <property type="entry name" value="GIDA_1"/>
    <property type="match status" value="1"/>
</dbReference>
<dbReference type="PROSITE" id="PS01281">
    <property type="entry name" value="GIDA_2"/>
    <property type="match status" value="1"/>
</dbReference>
<comment type="function">
    <text evidence="1">NAD-binding protein involved in the addition of a carboxymethylaminomethyl (cmnm) group at the wobble position (U34) of certain tRNAs, forming tRNA-cmnm(5)s(2)U34.</text>
</comment>
<comment type="cofactor">
    <cofactor evidence="1">
        <name>FAD</name>
        <dbReference type="ChEBI" id="CHEBI:57692"/>
    </cofactor>
</comment>
<comment type="subunit">
    <text evidence="1">Homodimer. Heterotetramer of two MnmE and two MnmG subunits.</text>
</comment>
<comment type="subcellular location">
    <subcellularLocation>
        <location evidence="1">Cytoplasm</location>
    </subcellularLocation>
</comment>
<comment type="similarity">
    <text evidence="1">Belongs to the MnmG family.</text>
</comment>